<protein>
    <recommendedName>
        <fullName evidence="2">Ribonuclease R</fullName>
        <shortName evidence="2">RNase R</shortName>
        <ecNumber evidence="2">3.1.13.1</ecNumber>
    </recommendedName>
    <alternativeName>
        <fullName>VacB protein homolog</fullName>
    </alternativeName>
</protein>
<comment type="function">
    <text evidence="2">3'-5' exoribonuclease that releases 5'-nucleoside monophosphates and is involved in maturation of structured RNAs.</text>
</comment>
<comment type="catalytic activity">
    <reaction evidence="2">
        <text>Exonucleolytic cleavage in the 3'- to 5'-direction to yield nucleoside 5'-phosphates.</text>
        <dbReference type="EC" id="3.1.13.1"/>
    </reaction>
</comment>
<comment type="subunit">
    <text evidence="2">Monomer.</text>
</comment>
<comment type="subcellular location">
    <subcellularLocation>
        <location evidence="2">Cytoplasm</location>
    </subcellularLocation>
</comment>
<comment type="similarity">
    <text evidence="2">Belongs to the RNR ribonuclease family. RNase R subfamily.</text>
</comment>
<accession>Q8K917</accession>
<name>RNR_BUCAP</name>
<reference key="1">
    <citation type="journal article" date="2002" name="Science">
        <title>50 million years of genomic stasis in endosymbiotic bacteria.</title>
        <authorList>
            <person name="Tamas I."/>
            <person name="Klasson L."/>
            <person name="Canbaeck B."/>
            <person name="Naeslund A.K."/>
            <person name="Eriksson A.-S."/>
            <person name="Wernegreen J.J."/>
            <person name="Sandstroem J.P."/>
            <person name="Moran N.A."/>
            <person name="Andersson S.G.E."/>
        </authorList>
    </citation>
    <scope>NUCLEOTIDE SEQUENCE [LARGE SCALE GENOMIC DNA]</scope>
    <source>
        <strain>Sg</strain>
    </source>
</reference>
<gene>
    <name evidence="2" type="primary">rnr</name>
    <name type="ordered locus">BUsg_545</name>
</gene>
<feature type="chain" id="PRO_0000166398" description="Ribonuclease R">
    <location>
        <begin position="1"/>
        <end position="726"/>
    </location>
</feature>
<feature type="domain" description="RNB" evidence="1">
    <location>
        <begin position="262"/>
        <end position="590"/>
    </location>
</feature>
<feature type="domain" description="S1 motif" evidence="2">
    <location>
        <begin position="642"/>
        <end position="723"/>
    </location>
</feature>
<sequence length="726" mass="84328">MVVDSYQKKETKKYRNFIPRREQILFLLKTDKDLISQKKLEKKFSINSQEQKKALRRRLRAMERDGQIIYTRNRCYITPENLKIVTGKVIGHRDGYGFLRTETFKDDLWLSIEQMKLCIHGDVILAHIVKSDRKGRNSAKVLKILRPNDVLIVGRYCVDNKKKFVIPNDTRFNFKIFILDSLISNENISIGTIVVVKLRENATKKSKIQGTIVEVLGKEMGTNLAIKIALRTHCIPYLWSKEVEYQLCGIKSKINEKDFKNRIDLRHLPFFTIDEEDARDFDDAIFCKKKTNGEKGWKLWVAISDVSYYIQPDTALDKAASKRGTSIYFPSLVIPMLPEKISIDVCSLNPNAERLSLICEMNLSNKGELITYKHYEAVICSHGRFTYNEIFKIWNGDIELCFKYKKLLKYIQNLSSLQKILKKYNVSKRGIYFENIEAKFILDSNYRIKNISQNIRNDAHKFIESCMILANIASAEFVKKHKSPVLFRNHDRPDKDSIINFRSVLKKLGLSLLGGEIPESTDYSELLKKISTRPDYEMIQTILLRSMKQAVYSPDNRGHFGLSLSSYVHFTSPIRRYPDLLVHRVIKNLLLKEKNLSKYHLYNLNEVTKIGLHCSMTERRADEATRDVLDWLKCDFMQKKIGDVLTGVISNVTSFGFFVRLNQFFIDGLVHIATLIDDYYYFDSIGLKLIGKSSKNTYCLGDTLKVKVISVNLNERKIELSLYMSR</sequence>
<evidence type="ECO:0000255" key="1"/>
<evidence type="ECO:0000255" key="2">
    <source>
        <dbReference type="HAMAP-Rule" id="MF_01895"/>
    </source>
</evidence>
<organism>
    <name type="scientific">Buchnera aphidicola subsp. Schizaphis graminum (strain Sg)</name>
    <dbReference type="NCBI Taxonomy" id="198804"/>
    <lineage>
        <taxon>Bacteria</taxon>
        <taxon>Pseudomonadati</taxon>
        <taxon>Pseudomonadota</taxon>
        <taxon>Gammaproteobacteria</taxon>
        <taxon>Enterobacterales</taxon>
        <taxon>Erwiniaceae</taxon>
        <taxon>Buchnera</taxon>
    </lineage>
</organism>
<keyword id="KW-0963">Cytoplasm</keyword>
<keyword id="KW-0269">Exonuclease</keyword>
<keyword id="KW-0378">Hydrolase</keyword>
<keyword id="KW-0540">Nuclease</keyword>
<keyword id="KW-0694">RNA-binding</keyword>
<proteinExistence type="inferred from homology"/>
<dbReference type="EC" id="3.1.13.1" evidence="2"/>
<dbReference type="EMBL" id="AE013218">
    <property type="protein sequence ID" value="AAM68084.1"/>
    <property type="molecule type" value="Genomic_DNA"/>
</dbReference>
<dbReference type="RefSeq" id="WP_011054050.1">
    <property type="nucleotide sequence ID" value="NC_004061.1"/>
</dbReference>
<dbReference type="SMR" id="Q8K917"/>
<dbReference type="STRING" id="198804.BUsg_545"/>
<dbReference type="GeneID" id="93004022"/>
<dbReference type="KEGG" id="bas:BUsg_545"/>
<dbReference type="eggNOG" id="COG0557">
    <property type="taxonomic scope" value="Bacteria"/>
</dbReference>
<dbReference type="HOGENOM" id="CLU_002333_7_0_6"/>
<dbReference type="Proteomes" id="UP000000416">
    <property type="component" value="Chromosome"/>
</dbReference>
<dbReference type="GO" id="GO:0005829">
    <property type="term" value="C:cytosol"/>
    <property type="evidence" value="ECO:0007669"/>
    <property type="project" value="TreeGrafter"/>
</dbReference>
<dbReference type="GO" id="GO:0008859">
    <property type="term" value="F:exoribonuclease II activity"/>
    <property type="evidence" value="ECO:0007669"/>
    <property type="project" value="UniProtKB-UniRule"/>
</dbReference>
<dbReference type="GO" id="GO:0003723">
    <property type="term" value="F:RNA binding"/>
    <property type="evidence" value="ECO:0007669"/>
    <property type="project" value="UniProtKB-UniRule"/>
</dbReference>
<dbReference type="GO" id="GO:0006402">
    <property type="term" value="P:mRNA catabolic process"/>
    <property type="evidence" value="ECO:0007669"/>
    <property type="project" value="TreeGrafter"/>
</dbReference>
<dbReference type="CDD" id="cd04471">
    <property type="entry name" value="S1_RNase_R"/>
    <property type="match status" value="1"/>
</dbReference>
<dbReference type="Gene3D" id="2.40.50.140">
    <property type="entry name" value="Nucleic acid-binding proteins"/>
    <property type="match status" value="2"/>
</dbReference>
<dbReference type="HAMAP" id="MF_01895">
    <property type="entry name" value="RNase_R"/>
    <property type="match status" value="1"/>
</dbReference>
<dbReference type="InterPro" id="IPR011129">
    <property type="entry name" value="CSD"/>
</dbReference>
<dbReference type="InterPro" id="IPR040476">
    <property type="entry name" value="CSD2"/>
</dbReference>
<dbReference type="InterPro" id="IPR012340">
    <property type="entry name" value="NA-bd_OB-fold"/>
</dbReference>
<dbReference type="InterPro" id="IPR013223">
    <property type="entry name" value="RNase_B_OB_dom"/>
</dbReference>
<dbReference type="InterPro" id="IPR001900">
    <property type="entry name" value="RNase_II/R"/>
</dbReference>
<dbReference type="InterPro" id="IPR022966">
    <property type="entry name" value="RNase_II/R_CS"/>
</dbReference>
<dbReference type="InterPro" id="IPR004476">
    <property type="entry name" value="RNase_II/RNase_R"/>
</dbReference>
<dbReference type="InterPro" id="IPR011805">
    <property type="entry name" value="RNase_R"/>
</dbReference>
<dbReference type="InterPro" id="IPR013668">
    <property type="entry name" value="RNase_R_HTH_12"/>
</dbReference>
<dbReference type="InterPro" id="IPR050180">
    <property type="entry name" value="RNR_Ribonuclease"/>
</dbReference>
<dbReference type="InterPro" id="IPR003029">
    <property type="entry name" value="S1_domain"/>
</dbReference>
<dbReference type="NCBIfam" id="TIGR00358">
    <property type="entry name" value="3_prime_RNase"/>
    <property type="match status" value="1"/>
</dbReference>
<dbReference type="NCBIfam" id="NF008648">
    <property type="entry name" value="PRK11642.1"/>
    <property type="match status" value="1"/>
</dbReference>
<dbReference type="NCBIfam" id="TIGR02063">
    <property type="entry name" value="RNase_R"/>
    <property type="match status" value="1"/>
</dbReference>
<dbReference type="PANTHER" id="PTHR23355:SF9">
    <property type="entry name" value="DIS3-LIKE EXONUCLEASE 2"/>
    <property type="match status" value="1"/>
</dbReference>
<dbReference type="PANTHER" id="PTHR23355">
    <property type="entry name" value="RIBONUCLEASE"/>
    <property type="match status" value="1"/>
</dbReference>
<dbReference type="Pfam" id="PF17876">
    <property type="entry name" value="CSD2"/>
    <property type="match status" value="1"/>
</dbReference>
<dbReference type="Pfam" id="PF08461">
    <property type="entry name" value="HTH_12"/>
    <property type="match status" value="1"/>
</dbReference>
<dbReference type="Pfam" id="PF08206">
    <property type="entry name" value="OB_RNB"/>
    <property type="match status" value="1"/>
</dbReference>
<dbReference type="Pfam" id="PF00773">
    <property type="entry name" value="RNB"/>
    <property type="match status" value="1"/>
</dbReference>
<dbReference type="Pfam" id="PF00575">
    <property type="entry name" value="S1"/>
    <property type="match status" value="1"/>
</dbReference>
<dbReference type="SMART" id="SM00357">
    <property type="entry name" value="CSP"/>
    <property type="match status" value="1"/>
</dbReference>
<dbReference type="SMART" id="SM00955">
    <property type="entry name" value="RNB"/>
    <property type="match status" value="1"/>
</dbReference>
<dbReference type="SMART" id="SM00316">
    <property type="entry name" value="S1"/>
    <property type="match status" value="1"/>
</dbReference>
<dbReference type="SUPFAM" id="SSF50249">
    <property type="entry name" value="Nucleic acid-binding proteins"/>
    <property type="match status" value="4"/>
</dbReference>
<dbReference type="PROSITE" id="PS01175">
    <property type="entry name" value="RIBONUCLEASE_II"/>
    <property type="match status" value="1"/>
</dbReference>
<dbReference type="PROSITE" id="PS50126">
    <property type="entry name" value="S1"/>
    <property type="match status" value="1"/>
</dbReference>